<protein>
    <recommendedName>
        <fullName>Thermostable direct hemolysin-related</fullName>
    </recommendedName>
</protein>
<keyword id="KW-0204">Cytolysis</keyword>
<keyword id="KW-0903">Direct protein sequencing</keyword>
<keyword id="KW-1015">Disulfide bond</keyword>
<keyword id="KW-0354">Hemolysis</keyword>
<keyword id="KW-0732">Signal</keyword>
<keyword id="KW-0800">Toxin</keyword>
<keyword id="KW-0843">Virulence</keyword>
<gene>
    <name type="primary">tdh3</name>
    <name type="synonym">tdh/I</name>
    <name type="synonym">tdhX</name>
</gene>
<evidence type="ECO:0000250" key="1"/>
<evidence type="ECO:0000305" key="2"/>
<organism>
    <name type="scientific">Vibrio parahaemolyticus</name>
    <dbReference type="NCBI Taxonomy" id="670"/>
    <lineage>
        <taxon>Bacteria</taxon>
        <taxon>Pseudomonadati</taxon>
        <taxon>Pseudomonadota</taxon>
        <taxon>Gammaproteobacteria</taxon>
        <taxon>Vibrionales</taxon>
        <taxon>Vibrionaceae</taxon>
        <taxon>Vibrio</taxon>
    </lineage>
</organism>
<proteinExistence type="evidence at protein level"/>
<comment type="function">
    <text>Bacterial hemolysins are exotoxins that attack blood cell membranes and cause cell rupture by mechanisms not clearly defined.</text>
</comment>
<comment type="subunit">
    <text>Homodimer.</text>
</comment>
<comment type="miscellaneous">
    <text>This hemolysin is not associated with the Kanagawa phenomenon.</text>
</comment>
<comment type="similarity">
    <text evidence="2">Belongs to the TDH hemolysin family.</text>
</comment>
<dbReference type="EMBL" id="D90238">
    <property type="protein sequence ID" value="BAA14285.1"/>
    <property type="molecule type" value="Genomic_DNA"/>
</dbReference>
<dbReference type="EMBL" id="X54342">
    <property type="protein sequence ID" value="CAA38230.1"/>
    <property type="molecule type" value="Genomic_DNA"/>
</dbReference>
<dbReference type="EMBL" id="S67841">
    <property type="protein sequence ID" value="AAP14018.1"/>
    <property type="molecule type" value="Genomic_DNA"/>
</dbReference>
<dbReference type="PIR" id="A49748">
    <property type="entry name" value="A49748"/>
</dbReference>
<dbReference type="SMR" id="P28029"/>
<dbReference type="PATRIC" id="fig|670.322.peg.202"/>
<dbReference type="GO" id="GO:0005576">
    <property type="term" value="C:extracellular region"/>
    <property type="evidence" value="ECO:0007669"/>
    <property type="project" value="InterPro"/>
</dbReference>
<dbReference type="GO" id="GO:0090729">
    <property type="term" value="F:toxin activity"/>
    <property type="evidence" value="ECO:0007669"/>
    <property type="project" value="UniProtKB-KW"/>
</dbReference>
<dbReference type="GO" id="GO:0019836">
    <property type="term" value="P:symbiont-mediated hemolysis of host erythrocyte"/>
    <property type="evidence" value="ECO:0007669"/>
    <property type="project" value="InterPro"/>
</dbReference>
<dbReference type="Gene3D" id="2.60.270.30">
    <property type="entry name" value="Vibrio parahaemolyticus thermostable direct hemolysin"/>
    <property type="match status" value="1"/>
</dbReference>
<dbReference type="InterPro" id="IPR038689">
    <property type="entry name" value="TDH_sf"/>
</dbReference>
<dbReference type="InterPro" id="IPR005015">
    <property type="entry name" value="Thermostable_hemolysn_vibrio"/>
</dbReference>
<dbReference type="Pfam" id="PF03347">
    <property type="entry name" value="TDH"/>
    <property type="match status" value="1"/>
</dbReference>
<accession>P28029</accession>
<sequence length="189" mass="21550">MKYRYFAKKSFLFISMLAAFKTFAFELPSVPFPAPGSDEILFVVRDATFNTNAPVNVKVSDFWTNRNVKRKPYKDVYGQSVFTTSGTKWLTSYMTVNINDKDYTMAAVSGYKRGHSAVFVKSDQVQLQHSYNSVANFVGEDEDSIPSKMYLDETPEYFVNVEAYESGSGNILVMCISNKESFFECEHQK</sequence>
<reference key="1">
    <citation type="journal article" date="1991" name="J. Gen. Microbiol.">
        <title>Characterization of a new thermostable direct haemolysin produced by a Kanagawa-phenomenon-negative clinical isolate of Vibrio parahaemolyticus.</title>
        <authorList>
            <person name="Honda T."/>
            <person name="Abad-Lapuebla M.A."/>
            <person name="Ni Y."/>
            <person name="Yamamoto K."/>
            <person name="Miwatani T."/>
        </authorList>
    </citation>
    <scope>NUCLEOTIDE SEQUENCE [GENOMIC DNA]</scope>
    <scope>PARTIAL PROTEIN SEQUENCE</scope>
    <source>
        <strain>TH012</strain>
    </source>
</reference>
<reference key="2">
    <citation type="journal article" date="1990" name="Mol. Microbiol.">
        <title>Duplication and variation of the thermostable direct haemolysin (tdh) gene in Vibrio parahaemolyticus.</title>
        <authorList>
            <person name="Nishibuchi M."/>
            <person name="Kaper J.B."/>
        </authorList>
    </citation>
    <scope>NUCLEOTIDE SEQUENCE [GENOMIC DNA]</scope>
</reference>
<reference key="3">
    <citation type="journal article" date="1994" name="Infect. Immun.">
        <title>Demonstration and characterization of simultaneous production of a thermostable direct hemolysin (TDH/I) and a TDH-related hemolysin (TRHx) by a clinically isolated Vibrio parahaemolyticus strain, TH3766.</title>
        <authorList>
            <person name="Xu M."/>
            <person name="Iida T."/>
            <person name="Yamamoto K."/>
            <person name="Takarada Y."/>
            <person name="Miwatani T."/>
            <person name="Honda T."/>
        </authorList>
    </citation>
    <scope>NUCLEOTIDE SEQUENCE [GENOMIC DNA]</scope>
    <source>
        <strain>TH3766</strain>
    </source>
</reference>
<name>HLY3_VIBPH</name>
<feature type="signal peptide">
    <location>
        <begin position="1"/>
        <end position="24"/>
    </location>
</feature>
<feature type="chain" id="PRO_0000013363" description="Thermostable direct hemolysin-related">
    <location>
        <begin position="25"/>
        <end position="189"/>
    </location>
</feature>
<feature type="disulfide bond" evidence="1">
    <location>
        <begin position="175"/>
        <end position="185"/>
    </location>
</feature>
<feature type="sequence conflict" description="In Ref. 2." evidence="2" ref="2">
    <original>E</original>
    <variation>K</variation>
    <location>
        <position position="186"/>
    </location>
</feature>